<gene>
    <name evidence="1" type="primary">ydiU</name>
    <name evidence="1" type="synonym">selO</name>
    <name type="ordered locus">RPD_2948</name>
</gene>
<comment type="function">
    <text evidence="1">Nucleotidyltransferase involved in the post-translational modification of proteins. It can catalyze the addition of adenosine monophosphate (AMP) or uridine monophosphate (UMP) to a protein, resulting in modifications known as AMPylation and UMPylation.</text>
</comment>
<comment type="catalytic activity">
    <reaction evidence="1">
        <text>L-seryl-[protein] + ATP = 3-O-(5'-adenylyl)-L-seryl-[protein] + diphosphate</text>
        <dbReference type="Rhea" id="RHEA:58120"/>
        <dbReference type="Rhea" id="RHEA-COMP:9863"/>
        <dbReference type="Rhea" id="RHEA-COMP:15073"/>
        <dbReference type="ChEBI" id="CHEBI:29999"/>
        <dbReference type="ChEBI" id="CHEBI:30616"/>
        <dbReference type="ChEBI" id="CHEBI:33019"/>
        <dbReference type="ChEBI" id="CHEBI:142516"/>
        <dbReference type="EC" id="2.7.7.108"/>
    </reaction>
</comment>
<comment type="catalytic activity">
    <reaction evidence="1">
        <text>L-threonyl-[protein] + ATP = 3-O-(5'-adenylyl)-L-threonyl-[protein] + diphosphate</text>
        <dbReference type="Rhea" id="RHEA:54292"/>
        <dbReference type="Rhea" id="RHEA-COMP:11060"/>
        <dbReference type="Rhea" id="RHEA-COMP:13847"/>
        <dbReference type="ChEBI" id="CHEBI:30013"/>
        <dbReference type="ChEBI" id="CHEBI:30616"/>
        <dbReference type="ChEBI" id="CHEBI:33019"/>
        <dbReference type="ChEBI" id="CHEBI:138113"/>
        <dbReference type="EC" id="2.7.7.108"/>
    </reaction>
</comment>
<comment type="catalytic activity">
    <reaction evidence="1">
        <text>L-tyrosyl-[protein] + ATP = O-(5'-adenylyl)-L-tyrosyl-[protein] + diphosphate</text>
        <dbReference type="Rhea" id="RHEA:54288"/>
        <dbReference type="Rhea" id="RHEA-COMP:10136"/>
        <dbReference type="Rhea" id="RHEA-COMP:13846"/>
        <dbReference type="ChEBI" id="CHEBI:30616"/>
        <dbReference type="ChEBI" id="CHEBI:33019"/>
        <dbReference type="ChEBI" id="CHEBI:46858"/>
        <dbReference type="ChEBI" id="CHEBI:83624"/>
        <dbReference type="EC" id="2.7.7.108"/>
    </reaction>
</comment>
<comment type="catalytic activity">
    <reaction evidence="1">
        <text>L-histidyl-[protein] + UTP = N(tele)-(5'-uridylyl)-L-histidyl-[protein] + diphosphate</text>
        <dbReference type="Rhea" id="RHEA:83891"/>
        <dbReference type="Rhea" id="RHEA-COMP:9745"/>
        <dbReference type="Rhea" id="RHEA-COMP:20239"/>
        <dbReference type="ChEBI" id="CHEBI:29979"/>
        <dbReference type="ChEBI" id="CHEBI:33019"/>
        <dbReference type="ChEBI" id="CHEBI:46398"/>
        <dbReference type="ChEBI" id="CHEBI:233474"/>
    </reaction>
</comment>
<comment type="catalytic activity">
    <reaction evidence="1">
        <text>L-seryl-[protein] + UTP = O-(5'-uridylyl)-L-seryl-[protein] + diphosphate</text>
        <dbReference type="Rhea" id="RHEA:64604"/>
        <dbReference type="Rhea" id="RHEA-COMP:9863"/>
        <dbReference type="Rhea" id="RHEA-COMP:16635"/>
        <dbReference type="ChEBI" id="CHEBI:29999"/>
        <dbReference type="ChEBI" id="CHEBI:33019"/>
        <dbReference type="ChEBI" id="CHEBI:46398"/>
        <dbReference type="ChEBI" id="CHEBI:156051"/>
    </reaction>
</comment>
<comment type="catalytic activity">
    <reaction evidence="1">
        <text>L-tyrosyl-[protein] + UTP = O-(5'-uridylyl)-L-tyrosyl-[protein] + diphosphate</text>
        <dbReference type="Rhea" id="RHEA:83887"/>
        <dbReference type="Rhea" id="RHEA-COMP:10136"/>
        <dbReference type="Rhea" id="RHEA-COMP:20238"/>
        <dbReference type="ChEBI" id="CHEBI:33019"/>
        <dbReference type="ChEBI" id="CHEBI:46398"/>
        <dbReference type="ChEBI" id="CHEBI:46858"/>
        <dbReference type="ChEBI" id="CHEBI:90602"/>
    </reaction>
</comment>
<comment type="cofactor">
    <cofactor evidence="1">
        <name>Mg(2+)</name>
        <dbReference type="ChEBI" id="CHEBI:18420"/>
    </cofactor>
    <cofactor evidence="1">
        <name>Mn(2+)</name>
        <dbReference type="ChEBI" id="CHEBI:29035"/>
    </cofactor>
</comment>
<comment type="similarity">
    <text evidence="1">Belongs to the SELO family.</text>
</comment>
<accession>Q135R4</accession>
<feature type="chain" id="PRO_0000271859" description="Protein nucleotidyltransferase YdiU">
    <location>
        <begin position="1"/>
        <end position="492"/>
    </location>
</feature>
<feature type="active site" description="Proton acceptor" evidence="1">
    <location>
        <position position="250"/>
    </location>
</feature>
<feature type="binding site" evidence="1">
    <location>
        <position position="88"/>
    </location>
    <ligand>
        <name>ATP</name>
        <dbReference type="ChEBI" id="CHEBI:30616"/>
    </ligand>
</feature>
<feature type="binding site" evidence="1">
    <location>
        <position position="90"/>
    </location>
    <ligand>
        <name>ATP</name>
        <dbReference type="ChEBI" id="CHEBI:30616"/>
    </ligand>
</feature>
<feature type="binding site" evidence="1">
    <location>
        <position position="91"/>
    </location>
    <ligand>
        <name>ATP</name>
        <dbReference type="ChEBI" id="CHEBI:30616"/>
    </ligand>
</feature>
<feature type="binding site" evidence="1">
    <location>
        <position position="111"/>
    </location>
    <ligand>
        <name>ATP</name>
        <dbReference type="ChEBI" id="CHEBI:30616"/>
    </ligand>
</feature>
<feature type="binding site" evidence="1">
    <location>
        <position position="123"/>
    </location>
    <ligand>
        <name>ATP</name>
        <dbReference type="ChEBI" id="CHEBI:30616"/>
    </ligand>
</feature>
<feature type="binding site" evidence="1">
    <location>
        <position position="124"/>
    </location>
    <ligand>
        <name>ATP</name>
        <dbReference type="ChEBI" id="CHEBI:30616"/>
    </ligand>
</feature>
<feature type="binding site" evidence="1">
    <location>
        <position position="174"/>
    </location>
    <ligand>
        <name>ATP</name>
        <dbReference type="ChEBI" id="CHEBI:30616"/>
    </ligand>
</feature>
<feature type="binding site" evidence="1">
    <location>
        <position position="181"/>
    </location>
    <ligand>
        <name>ATP</name>
        <dbReference type="ChEBI" id="CHEBI:30616"/>
    </ligand>
</feature>
<feature type="binding site" evidence="1">
    <location>
        <position position="251"/>
    </location>
    <ligand>
        <name>Mg(2+)</name>
        <dbReference type="ChEBI" id="CHEBI:18420"/>
    </ligand>
</feature>
<feature type="binding site" evidence="1">
    <location>
        <position position="260"/>
    </location>
    <ligand>
        <name>ATP</name>
        <dbReference type="ChEBI" id="CHEBI:30616"/>
    </ligand>
</feature>
<feature type="binding site" evidence="1">
    <location>
        <position position="260"/>
    </location>
    <ligand>
        <name>Mg(2+)</name>
        <dbReference type="ChEBI" id="CHEBI:18420"/>
    </ligand>
</feature>
<reference key="1">
    <citation type="submission" date="2006-03" db="EMBL/GenBank/DDBJ databases">
        <title>Complete sequence of Rhodopseudomonas palustris BisB5.</title>
        <authorList>
            <consortium name="US DOE Joint Genome Institute"/>
            <person name="Copeland A."/>
            <person name="Lucas S."/>
            <person name="Lapidus A."/>
            <person name="Barry K."/>
            <person name="Detter J.C."/>
            <person name="Glavina del Rio T."/>
            <person name="Hammon N."/>
            <person name="Israni S."/>
            <person name="Dalin E."/>
            <person name="Tice H."/>
            <person name="Pitluck S."/>
            <person name="Chain P."/>
            <person name="Malfatti S."/>
            <person name="Shin M."/>
            <person name="Vergez L."/>
            <person name="Schmutz J."/>
            <person name="Larimer F."/>
            <person name="Land M."/>
            <person name="Hauser L."/>
            <person name="Pelletier D.A."/>
            <person name="Kyrpides N."/>
            <person name="Lykidis A."/>
            <person name="Oda Y."/>
            <person name="Harwood C.S."/>
            <person name="Richardson P."/>
        </authorList>
    </citation>
    <scope>NUCLEOTIDE SEQUENCE [LARGE SCALE GENOMIC DNA]</scope>
    <source>
        <strain>BisB5</strain>
    </source>
</reference>
<protein>
    <recommendedName>
        <fullName evidence="1">Protein nucleotidyltransferase YdiU</fullName>
        <ecNumber evidence="1">2.7.7.-</ecNumber>
    </recommendedName>
    <alternativeName>
        <fullName evidence="1">Protein adenylyltransferase YdiU</fullName>
        <ecNumber evidence="1">2.7.7.108</ecNumber>
    </alternativeName>
    <alternativeName>
        <fullName evidence="1">Protein uridylyltransferase YdiU</fullName>
        <ecNumber evidence="1">2.7.7.-</ecNumber>
    </alternativeName>
</protein>
<proteinExistence type="inferred from homology"/>
<sequence length="492" mass="53699">MTVHFPFDNSYAALPDNFFARVAPTPVAAPRLIKLNRPLAERLGLDPDWLDSPEGAEILAGARLPEGAASIAMAYAGHQFGQFVPQLGDGRAILLGEVIDRDGVRRDIQLKGSGRTPFSRMGDGRAALGPVLREYIVSEAMAALGIPTTRSLAAVLTGERVVRDQIQPGAVLTRVASSHIRVGTFQFFAARGDREAVRALADHVIARHYPEAAQADAPYLALLEGVIARQADLIARWMMIGFIHGVMNTDNCSIAGETIDYGPCAFMDTFDPKTVFSSIDHMGRYAFGNQPPIALWNLTRLAECLVPLLSADEDKGVEIAQTVLGGFAERFNATYLAGLAAKLGLFTTQADDAQLSQDFLAAMAKGRADFTLTFRRLSDAAIDPTELGTVRALFDDPAAFDDWAPRWRQRVTAEPQDGAARQAAMRAVNPAYIPRNHRVEAAIRAAVDKDDFGPFHELLTVLTNPFREQPEFDRYADPPQPHERVLETFCGT</sequence>
<dbReference type="EC" id="2.7.7.-" evidence="1"/>
<dbReference type="EC" id="2.7.7.108" evidence="1"/>
<dbReference type="EMBL" id="CP000283">
    <property type="protein sequence ID" value="ABE40175.1"/>
    <property type="molecule type" value="Genomic_DNA"/>
</dbReference>
<dbReference type="SMR" id="Q135R4"/>
<dbReference type="STRING" id="316057.RPD_2948"/>
<dbReference type="KEGG" id="rpd:RPD_2948"/>
<dbReference type="eggNOG" id="COG0397">
    <property type="taxonomic scope" value="Bacteria"/>
</dbReference>
<dbReference type="HOGENOM" id="CLU_010245_4_1_5"/>
<dbReference type="BioCyc" id="RPAL316057:RPD_RS14815-MONOMER"/>
<dbReference type="Proteomes" id="UP000001818">
    <property type="component" value="Chromosome"/>
</dbReference>
<dbReference type="GO" id="GO:0070733">
    <property type="term" value="F:AMPylase activity"/>
    <property type="evidence" value="ECO:0007669"/>
    <property type="project" value="RHEA"/>
</dbReference>
<dbReference type="GO" id="GO:0005524">
    <property type="term" value="F:ATP binding"/>
    <property type="evidence" value="ECO:0007669"/>
    <property type="project" value="UniProtKB-UniRule"/>
</dbReference>
<dbReference type="GO" id="GO:0000287">
    <property type="term" value="F:magnesium ion binding"/>
    <property type="evidence" value="ECO:0007669"/>
    <property type="project" value="UniProtKB-UniRule"/>
</dbReference>
<dbReference type="HAMAP" id="MF_00692">
    <property type="entry name" value="YdiU_SelO"/>
    <property type="match status" value="1"/>
</dbReference>
<dbReference type="InterPro" id="IPR003846">
    <property type="entry name" value="SelO"/>
</dbReference>
<dbReference type="NCBIfam" id="NF000658">
    <property type="entry name" value="PRK00029.1"/>
    <property type="match status" value="1"/>
</dbReference>
<dbReference type="PANTHER" id="PTHR32057">
    <property type="entry name" value="PROTEIN ADENYLYLTRANSFERASE SELO, MITOCHONDRIAL"/>
    <property type="match status" value="1"/>
</dbReference>
<dbReference type="PANTHER" id="PTHR32057:SF14">
    <property type="entry name" value="PROTEIN ADENYLYLTRANSFERASE SELO, MITOCHONDRIAL"/>
    <property type="match status" value="1"/>
</dbReference>
<dbReference type="Pfam" id="PF02696">
    <property type="entry name" value="SelO"/>
    <property type="match status" value="1"/>
</dbReference>
<organism>
    <name type="scientific">Rhodopseudomonas palustris (strain BisB5)</name>
    <dbReference type="NCBI Taxonomy" id="316057"/>
    <lineage>
        <taxon>Bacteria</taxon>
        <taxon>Pseudomonadati</taxon>
        <taxon>Pseudomonadota</taxon>
        <taxon>Alphaproteobacteria</taxon>
        <taxon>Hyphomicrobiales</taxon>
        <taxon>Nitrobacteraceae</taxon>
        <taxon>Rhodopseudomonas</taxon>
    </lineage>
</organism>
<evidence type="ECO:0000255" key="1">
    <source>
        <dbReference type="HAMAP-Rule" id="MF_00692"/>
    </source>
</evidence>
<keyword id="KW-0067">ATP-binding</keyword>
<keyword id="KW-0460">Magnesium</keyword>
<keyword id="KW-0464">Manganese</keyword>
<keyword id="KW-0479">Metal-binding</keyword>
<keyword id="KW-0547">Nucleotide-binding</keyword>
<keyword id="KW-0548">Nucleotidyltransferase</keyword>
<keyword id="KW-0808">Transferase</keyword>
<name>SELO_RHOPS</name>